<dbReference type="EMBL" id="CP000301">
    <property type="protein sequence ID" value="ABD88988.1"/>
    <property type="molecule type" value="Genomic_DNA"/>
</dbReference>
<dbReference type="SMR" id="Q211E8"/>
<dbReference type="STRING" id="316056.RPC_3448"/>
<dbReference type="KEGG" id="rpc:RPC_3448"/>
<dbReference type="eggNOG" id="COG0087">
    <property type="taxonomic scope" value="Bacteria"/>
</dbReference>
<dbReference type="HOGENOM" id="CLU_044142_2_0_5"/>
<dbReference type="OrthoDB" id="9806135at2"/>
<dbReference type="GO" id="GO:0022625">
    <property type="term" value="C:cytosolic large ribosomal subunit"/>
    <property type="evidence" value="ECO:0007669"/>
    <property type="project" value="TreeGrafter"/>
</dbReference>
<dbReference type="GO" id="GO:0019843">
    <property type="term" value="F:rRNA binding"/>
    <property type="evidence" value="ECO:0007669"/>
    <property type="project" value="UniProtKB-UniRule"/>
</dbReference>
<dbReference type="GO" id="GO:0003735">
    <property type="term" value="F:structural constituent of ribosome"/>
    <property type="evidence" value="ECO:0007669"/>
    <property type="project" value="InterPro"/>
</dbReference>
<dbReference type="GO" id="GO:0006412">
    <property type="term" value="P:translation"/>
    <property type="evidence" value="ECO:0007669"/>
    <property type="project" value="UniProtKB-UniRule"/>
</dbReference>
<dbReference type="FunFam" id="2.40.30.10:FF:000004">
    <property type="entry name" value="50S ribosomal protein L3"/>
    <property type="match status" value="1"/>
</dbReference>
<dbReference type="FunFam" id="3.30.160.810:FF:000001">
    <property type="entry name" value="50S ribosomal protein L3"/>
    <property type="match status" value="1"/>
</dbReference>
<dbReference type="Gene3D" id="3.30.160.810">
    <property type="match status" value="1"/>
</dbReference>
<dbReference type="Gene3D" id="2.40.30.10">
    <property type="entry name" value="Translation factors"/>
    <property type="match status" value="1"/>
</dbReference>
<dbReference type="HAMAP" id="MF_01325_B">
    <property type="entry name" value="Ribosomal_uL3_B"/>
    <property type="match status" value="1"/>
</dbReference>
<dbReference type="InterPro" id="IPR000597">
    <property type="entry name" value="Ribosomal_uL3"/>
</dbReference>
<dbReference type="InterPro" id="IPR019927">
    <property type="entry name" value="Ribosomal_uL3_bac/org-type"/>
</dbReference>
<dbReference type="InterPro" id="IPR019926">
    <property type="entry name" value="Ribosomal_uL3_CS"/>
</dbReference>
<dbReference type="InterPro" id="IPR009000">
    <property type="entry name" value="Transl_B-barrel_sf"/>
</dbReference>
<dbReference type="NCBIfam" id="TIGR03625">
    <property type="entry name" value="L3_bact"/>
    <property type="match status" value="1"/>
</dbReference>
<dbReference type="PANTHER" id="PTHR11229">
    <property type="entry name" value="50S RIBOSOMAL PROTEIN L3"/>
    <property type="match status" value="1"/>
</dbReference>
<dbReference type="PANTHER" id="PTHR11229:SF16">
    <property type="entry name" value="LARGE RIBOSOMAL SUBUNIT PROTEIN UL3C"/>
    <property type="match status" value="1"/>
</dbReference>
<dbReference type="Pfam" id="PF00297">
    <property type="entry name" value="Ribosomal_L3"/>
    <property type="match status" value="1"/>
</dbReference>
<dbReference type="SUPFAM" id="SSF50447">
    <property type="entry name" value="Translation proteins"/>
    <property type="match status" value="1"/>
</dbReference>
<dbReference type="PROSITE" id="PS00474">
    <property type="entry name" value="RIBOSOMAL_L3"/>
    <property type="match status" value="1"/>
</dbReference>
<keyword id="KW-0488">Methylation</keyword>
<keyword id="KW-0687">Ribonucleoprotein</keyword>
<keyword id="KW-0689">Ribosomal protein</keyword>
<keyword id="KW-0694">RNA-binding</keyword>
<keyword id="KW-0699">rRNA-binding</keyword>
<proteinExistence type="inferred from homology"/>
<evidence type="ECO:0000255" key="1">
    <source>
        <dbReference type="HAMAP-Rule" id="MF_01325"/>
    </source>
</evidence>
<evidence type="ECO:0000256" key="2">
    <source>
        <dbReference type="SAM" id="MobiDB-lite"/>
    </source>
</evidence>
<evidence type="ECO:0000305" key="3"/>
<sequence length="243" mass="25661">MRSGVIAQKVGMTRVFTETGEHIPVTVLKLGNCQVLGHRTTEKNGYVAMQLGSGTRKTVYLPKAERGQFAVAKVEPKRKVAEFRVSEDALIPVGAEIQADHFVVGQFVDVTGTSVGKGFAGGIKRWNFGGLRATHGVSVSHRSIGSTGGRQDPGKTFKNKKMPGHMGVDRITTLNLRVVQTDVARGLILVEGAVPGSKGGWIAVRDAVKKVLPADAPKPGKFRLADGGGEQTAAAPAAEQEGV</sequence>
<organism>
    <name type="scientific">Rhodopseudomonas palustris (strain BisB18)</name>
    <dbReference type="NCBI Taxonomy" id="316056"/>
    <lineage>
        <taxon>Bacteria</taxon>
        <taxon>Pseudomonadati</taxon>
        <taxon>Pseudomonadota</taxon>
        <taxon>Alphaproteobacteria</taxon>
        <taxon>Hyphomicrobiales</taxon>
        <taxon>Nitrobacteraceae</taxon>
        <taxon>Rhodopseudomonas</taxon>
    </lineage>
</organism>
<gene>
    <name evidence="1" type="primary">rplC</name>
    <name type="ordered locus">RPC_3448</name>
</gene>
<comment type="function">
    <text evidence="1">One of the primary rRNA binding proteins, it binds directly near the 3'-end of the 23S rRNA, where it nucleates assembly of the 50S subunit.</text>
</comment>
<comment type="subunit">
    <text evidence="1">Part of the 50S ribosomal subunit. Forms a cluster with proteins L14 and L19.</text>
</comment>
<comment type="PTM">
    <text evidence="1">Methylated by PrmB.</text>
</comment>
<comment type="similarity">
    <text evidence="1">Belongs to the universal ribosomal protein uL3 family.</text>
</comment>
<feature type="chain" id="PRO_0000241399" description="Large ribosomal subunit protein uL3">
    <location>
        <begin position="1"/>
        <end position="243"/>
    </location>
</feature>
<feature type="region of interest" description="Disordered" evidence="2">
    <location>
        <begin position="139"/>
        <end position="164"/>
    </location>
</feature>
<feature type="region of interest" description="Disordered" evidence="2">
    <location>
        <begin position="218"/>
        <end position="243"/>
    </location>
</feature>
<feature type="compositionally biased region" description="Low complexity" evidence="2">
    <location>
        <begin position="231"/>
        <end position="243"/>
    </location>
</feature>
<feature type="modified residue" description="N5-methylglutamine" evidence="1">
    <location>
        <position position="151"/>
    </location>
</feature>
<protein>
    <recommendedName>
        <fullName evidence="1">Large ribosomal subunit protein uL3</fullName>
    </recommendedName>
    <alternativeName>
        <fullName evidence="3">50S ribosomal protein L3</fullName>
    </alternativeName>
</protein>
<accession>Q211E8</accession>
<name>RL3_RHOPB</name>
<reference key="1">
    <citation type="submission" date="2006-03" db="EMBL/GenBank/DDBJ databases">
        <title>Complete sequence of Rhodopseudomonas palustris BisB18.</title>
        <authorList>
            <consortium name="US DOE Joint Genome Institute"/>
            <person name="Copeland A."/>
            <person name="Lucas S."/>
            <person name="Lapidus A."/>
            <person name="Barry K."/>
            <person name="Detter J.C."/>
            <person name="Glavina del Rio T."/>
            <person name="Hammon N."/>
            <person name="Israni S."/>
            <person name="Dalin E."/>
            <person name="Tice H."/>
            <person name="Pitluck S."/>
            <person name="Chain P."/>
            <person name="Malfatti S."/>
            <person name="Shin M."/>
            <person name="Vergez L."/>
            <person name="Schmutz J."/>
            <person name="Larimer F."/>
            <person name="Land M."/>
            <person name="Hauser L."/>
            <person name="Pelletier D.A."/>
            <person name="Kyrpides N."/>
            <person name="Anderson I."/>
            <person name="Oda Y."/>
            <person name="Harwood C.S."/>
            <person name="Richardson P."/>
        </authorList>
    </citation>
    <scope>NUCLEOTIDE SEQUENCE [LARGE SCALE GENOMIC DNA]</scope>
    <source>
        <strain>BisB18</strain>
    </source>
</reference>